<gene>
    <name evidence="1" type="primary">dctA2</name>
    <name type="ordered locus">Pnap_3748</name>
</gene>
<protein>
    <recommendedName>
        <fullName evidence="1">C4-dicarboxylate transport protein 2</fullName>
    </recommendedName>
</protein>
<accession>A1VTR6</accession>
<evidence type="ECO:0000255" key="1">
    <source>
        <dbReference type="HAMAP-Rule" id="MF_01300"/>
    </source>
</evidence>
<proteinExistence type="inferred from homology"/>
<comment type="function">
    <text evidence="1">Responsible for the transport of dicarboxylates such as succinate, fumarate, and malate from the periplasm across the membrane.</text>
</comment>
<comment type="subcellular location">
    <subcellularLocation>
        <location evidence="1">Cell inner membrane</location>
        <topology evidence="1">Multi-pass membrane protein</topology>
    </subcellularLocation>
</comment>
<comment type="similarity">
    <text evidence="1">Belongs to the dicarboxylate/amino acid:cation symporter (DAACS) (TC 2.A.23) family.</text>
</comment>
<feature type="chain" id="PRO_5000211347" description="C4-dicarboxylate transport protein 2">
    <location>
        <begin position="1"/>
        <end position="448"/>
    </location>
</feature>
<feature type="transmembrane region" description="Helical" evidence="1">
    <location>
        <begin position="13"/>
        <end position="33"/>
    </location>
</feature>
<feature type="transmembrane region" description="Helical" evidence="1">
    <location>
        <begin position="49"/>
        <end position="69"/>
    </location>
</feature>
<feature type="transmembrane region" description="Helical" evidence="1">
    <location>
        <begin position="81"/>
        <end position="101"/>
    </location>
</feature>
<feature type="transmembrane region" description="Helical" evidence="1">
    <location>
        <begin position="149"/>
        <end position="169"/>
    </location>
</feature>
<feature type="transmembrane region" description="Helical" evidence="1">
    <location>
        <begin position="193"/>
        <end position="213"/>
    </location>
</feature>
<feature type="transmembrane region" description="Helical" evidence="1">
    <location>
        <begin position="227"/>
        <end position="247"/>
    </location>
</feature>
<feature type="transmembrane region" description="Helical" evidence="1">
    <location>
        <begin position="294"/>
        <end position="314"/>
    </location>
</feature>
<feature type="transmembrane region" description="Helical" evidence="1">
    <location>
        <begin position="335"/>
        <end position="355"/>
    </location>
</feature>
<feature type="transmembrane region" description="Helical" evidence="1">
    <location>
        <begin position="357"/>
        <end position="377"/>
    </location>
</feature>
<name>DCTA2_POLNA</name>
<keyword id="KW-0997">Cell inner membrane</keyword>
<keyword id="KW-1003">Cell membrane</keyword>
<keyword id="KW-0472">Membrane</keyword>
<keyword id="KW-1185">Reference proteome</keyword>
<keyword id="KW-0769">Symport</keyword>
<keyword id="KW-0812">Transmembrane</keyword>
<keyword id="KW-1133">Transmembrane helix</keyword>
<keyword id="KW-0813">Transport</keyword>
<reference key="1">
    <citation type="journal article" date="2009" name="Environ. Microbiol.">
        <title>The genome of Polaromonas naphthalenivorans strain CJ2, isolated from coal tar-contaminated sediment, reveals physiological and metabolic versatility and evolution through extensive horizontal gene transfer.</title>
        <authorList>
            <person name="Yagi J.M."/>
            <person name="Sims D."/>
            <person name="Brettin T."/>
            <person name="Bruce D."/>
            <person name="Madsen E.L."/>
        </authorList>
    </citation>
    <scope>NUCLEOTIDE SEQUENCE [LARGE SCALE GENOMIC DNA]</scope>
    <source>
        <strain>CJ2</strain>
    </source>
</reference>
<organism>
    <name type="scientific">Polaromonas naphthalenivorans (strain CJ2)</name>
    <dbReference type="NCBI Taxonomy" id="365044"/>
    <lineage>
        <taxon>Bacteria</taxon>
        <taxon>Pseudomonadati</taxon>
        <taxon>Pseudomonadota</taxon>
        <taxon>Betaproteobacteria</taxon>
        <taxon>Burkholderiales</taxon>
        <taxon>Comamonadaceae</taxon>
        <taxon>Polaromonas</taxon>
    </lineage>
</organism>
<sequence>MSKTNARKPIYKSLYVQVLAAVTIGVLLGHFSPELGAQMKPLGDGFIKLIKMIIAPIIFCTVVIGIAGMEDMKKVGKTGGLALLYFEVMSTLALVIGLIVVNVLQPGSGMHIDPASLDTKSIAAYTAPGKMQGTVDFLLNVIPTSVVDAFAKGEILQVLLFSVLFGFALHRFGGRGTMVFDFIEKFSHVLFDIVGIIMKVAPIGAFGAMAFTIGKYGLGSLFSLGKLMGAFYLTCLIFVFVVLGIVSRLHGFSVFKFVRYIKEELLIVLGTSSSESVLPRMMEKLENLGARKSVVGLVIPTGYSFNLDGTSIYLTMAAVFIAQATDTPMSLTQQITLLAVLMLTSKGAAGITGSGFIVLAATLSAVGGVPVAGLALILGIDRFMSEARALTNLVGNGVATLVVAKWTGDLDMQRLHQGLDQPSLQESQEPEVILDQQVAHMAVAKSHG</sequence>
<dbReference type="EMBL" id="CP000529">
    <property type="protein sequence ID" value="ABM39044.1"/>
    <property type="molecule type" value="Genomic_DNA"/>
</dbReference>
<dbReference type="RefSeq" id="WP_011803110.1">
    <property type="nucleotide sequence ID" value="NC_008781.1"/>
</dbReference>
<dbReference type="SMR" id="A1VTR6"/>
<dbReference type="STRING" id="365044.Pnap_3748"/>
<dbReference type="KEGG" id="pna:Pnap_3748"/>
<dbReference type="eggNOG" id="COG1301">
    <property type="taxonomic scope" value="Bacteria"/>
</dbReference>
<dbReference type="HOGENOM" id="CLU_019375_7_0_4"/>
<dbReference type="OrthoDB" id="9766690at2"/>
<dbReference type="Proteomes" id="UP000000644">
    <property type="component" value="Chromosome"/>
</dbReference>
<dbReference type="GO" id="GO:0005886">
    <property type="term" value="C:plasma membrane"/>
    <property type="evidence" value="ECO:0007669"/>
    <property type="project" value="UniProtKB-SubCell"/>
</dbReference>
<dbReference type="GO" id="GO:0015138">
    <property type="term" value="F:fumarate transmembrane transporter activity"/>
    <property type="evidence" value="ECO:0007669"/>
    <property type="project" value="TreeGrafter"/>
</dbReference>
<dbReference type="GO" id="GO:0015366">
    <property type="term" value="F:malate:proton symporter activity"/>
    <property type="evidence" value="ECO:0007669"/>
    <property type="project" value="TreeGrafter"/>
</dbReference>
<dbReference type="GO" id="GO:0015141">
    <property type="term" value="F:succinate transmembrane transporter activity"/>
    <property type="evidence" value="ECO:0007669"/>
    <property type="project" value="TreeGrafter"/>
</dbReference>
<dbReference type="GO" id="GO:0070778">
    <property type="term" value="P:L-aspartate transmembrane transport"/>
    <property type="evidence" value="ECO:0007669"/>
    <property type="project" value="TreeGrafter"/>
</dbReference>
<dbReference type="FunFam" id="1.10.3860.10:FF:000001">
    <property type="entry name" value="C4-dicarboxylate transport protein"/>
    <property type="match status" value="1"/>
</dbReference>
<dbReference type="Gene3D" id="1.10.3860.10">
    <property type="entry name" value="Sodium:dicarboxylate symporter"/>
    <property type="match status" value="1"/>
</dbReference>
<dbReference type="HAMAP" id="MF_01300">
    <property type="entry name" value="C4_dicarb_transport"/>
    <property type="match status" value="1"/>
</dbReference>
<dbReference type="InterPro" id="IPR023954">
    <property type="entry name" value="C4_dicarb_transport"/>
</dbReference>
<dbReference type="InterPro" id="IPR001991">
    <property type="entry name" value="Na-dicarboxylate_symporter"/>
</dbReference>
<dbReference type="InterPro" id="IPR018107">
    <property type="entry name" value="Na-dicarboxylate_symporter_CS"/>
</dbReference>
<dbReference type="InterPro" id="IPR036458">
    <property type="entry name" value="Na:dicarbo_symporter_sf"/>
</dbReference>
<dbReference type="NCBIfam" id="NF002461">
    <property type="entry name" value="PRK01663.1"/>
    <property type="match status" value="1"/>
</dbReference>
<dbReference type="NCBIfam" id="NF009587">
    <property type="entry name" value="PRK13027.1"/>
    <property type="match status" value="1"/>
</dbReference>
<dbReference type="PANTHER" id="PTHR42865:SF1">
    <property type="entry name" value="AEROBIC C4-DICARBOXYLATE TRANSPORT PROTEIN"/>
    <property type="match status" value="1"/>
</dbReference>
<dbReference type="PANTHER" id="PTHR42865">
    <property type="entry name" value="PROTON/GLUTAMATE-ASPARTATE SYMPORTER"/>
    <property type="match status" value="1"/>
</dbReference>
<dbReference type="Pfam" id="PF00375">
    <property type="entry name" value="SDF"/>
    <property type="match status" value="1"/>
</dbReference>
<dbReference type="PRINTS" id="PR00173">
    <property type="entry name" value="EDTRNSPORT"/>
</dbReference>
<dbReference type="SUPFAM" id="SSF118215">
    <property type="entry name" value="Proton glutamate symport protein"/>
    <property type="match status" value="1"/>
</dbReference>
<dbReference type="PROSITE" id="PS00713">
    <property type="entry name" value="NA_DICARBOXYL_SYMP_1"/>
    <property type="match status" value="1"/>
</dbReference>
<dbReference type="PROSITE" id="PS00714">
    <property type="entry name" value="NA_DICARBOXYL_SYMP_2"/>
    <property type="match status" value="1"/>
</dbReference>